<proteinExistence type="inferred from homology"/>
<accession>B0V8R7</accession>
<protein>
    <recommendedName>
        <fullName evidence="1">1-(5-phosphoribosyl)-5-[(5-phosphoribosylamino)methylideneamino] imidazole-4-carboxamide isomerase</fullName>
        <ecNumber evidence="1">5.3.1.16</ecNumber>
    </recommendedName>
    <alternativeName>
        <fullName evidence="1">Phosphoribosylformimino-5-aminoimidazole carboxamide ribotide isomerase</fullName>
    </alternativeName>
</protein>
<dbReference type="EC" id="5.3.1.16" evidence="1"/>
<dbReference type="EMBL" id="CU459141">
    <property type="protein sequence ID" value="CAM85231.1"/>
    <property type="molecule type" value="Genomic_DNA"/>
</dbReference>
<dbReference type="RefSeq" id="WP_000905538.1">
    <property type="nucleotide sequence ID" value="NZ_JBDGFB010000011.1"/>
</dbReference>
<dbReference type="SMR" id="B0V8R7"/>
<dbReference type="EnsemblBacteria" id="CAM85231">
    <property type="protein sequence ID" value="CAM85231"/>
    <property type="gene ID" value="ABAYE0250"/>
</dbReference>
<dbReference type="GeneID" id="92895476"/>
<dbReference type="KEGG" id="aby:ABAYE0250"/>
<dbReference type="HOGENOM" id="CLU_048577_1_1_6"/>
<dbReference type="UniPathway" id="UPA00031">
    <property type="reaction ID" value="UER00009"/>
</dbReference>
<dbReference type="GO" id="GO:0005737">
    <property type="term" value="C:cytoplasm"/>
    <property type="evidence" value="ECO:0007669"/>
    <property type="project" value="UniProtKB-SubCell"/>
</dbReference>
<dbReference type="GO" id="GO:0003949">
    <property type="term" value="F:1-(5-phosphoribosyl)-5-[(5-phosphoribosylamino)methylideneamino]imidazole-4-carboxamide isomerase activity"/>
    <property type="evidence" value="ECO:0007669"/>
    <property type="project" value="UniProtKB-UniRule"/>
</dbReference>
<dbReference type="GO" id="GO:0000105">
    <property type="term" value="P:L-histidine biosynthetic process"/>
    <property type="evidence" value="ECO:0007669"/>
    <property type="project" value="UniProtKB-UniRule"/>
</dbReference>
<dbReference type="GO" id="GO:0000162">
    <property type="term" value="P:L-tryptophan biosynthetic process"/>
    <property type="evidence" value="ECO:0007669"/>
    <property type="project" value="TreeGrafter"/>
</dbReference>
<dbReference type="CDD" id="cd04732">
    <property type="entry name" value="HisA"/>
    <property type="match status" value="1"/>
</dbReference>
<dbReference type="FunFam" id="3.20.20.70:FF:000009">
    <property type="entry name" value="1-(5-phosphoribosyl)-5-[(5-phosphoribosylamino)methylideneamino] imidazole-4-carboxamide isomerase"/>
    <property type="match status" value="1"/>
</dbReference>
<dbReference type="Gene3D" id="3.20.20.70">
    <property type="entry name" value="Aldolase class I"/>
    <property type="match status" value="1"/>
</dbReference>
<dbReference type="HAMAP" id="MF_01014">
    <property type="entry name" value="HisA"/>
    <property type="match status" value="1"/>
</dbReference>
<dbReference type="InterPro" id="IPR013785">
    <property type="entry name" value="Aldolase_TIM"/>
</dbReference>
<dbReference type="InterPro" id="IPR006062">
    <property type="entry name" value="His_biosynth"/>
</dbReference>
<dbReference type="InterPro" id="IPR006063">
    <property type="entry name" value="HisA_bact_arch"/>
</dbReference>
<dbReference type="InterPro" id="IPR044524">
    <property type="entry name" value="Isoase_HisA-like"/>
</dbReference>
<dbReference type="InterPro" id="IPR023016">
    <property type="entry name" value="Isoase_HisA-like_bact"/>
</dbReference>
<dbReference type="InterPro" id="IPR011060">
    <property type="entry name" value="RibuloseP-bd_barrel"/>
</dbReference>
<dbReference type="NCBIfam" id="TIGR00007">
    <property type="entry name" value="1-(5-phosphoribosyl)-5-[(5-phosphoribosylamino)methylideneamino]imidazole-4-carboxamide isomerase"/>
    <property type="match status" value="1"/>
</dbReference>
<dbReference type="PANTHER" id="PTHR43090">
    <property type="entry name" value="1-(5-PHOSPHORIBOSYL)-5-[(5-PHOSPHORIBOSYLAMINO)METHYLIDENEAMINO] IMIDAZOLE-4-CARBOXAMIDE ISOMERASE"/>
    <property type="match status" value="1"/>
</dbReference>
<dbReference type="PANTHER" id="PTHR43090:SF2">
    <property type="entry name" value="1-(5-PHOSPHORIBOSYL)-5-[(5-PHOSPHORIBOSYLAMINO)METHYLIDENEAMINO] IMIDAZOLE-4-CARBOXAMIDE ISOMERASE"/>
    <property type="match status" value="1"/>
</dbReference>
<dbReference type="Pfam" id="PF00977">
    <property type="entry name" value="His_biosynth"/>
    <property type="match status" value="1"/>
</dbReference>
<dbReference type="SUPFAM" id="SSF51366">
    <property type="entry name" value="Ribulose-phoshate binding barrel"/>
    <property type="match status" value="1"/>
</dbReference>
<reference key="1">
    <citation type="journal article" date="2008" name="PLoS ONE">
        <title>Comparative analysis of Acinetobacters: three genomes for three lifestyles.</title>
        <authorList>
            <person name="Vallenet D."/>
            <person name="Nordmann P."/>
            <person name="Barbe V."/>
            <person name="Poirel L."/>
            <person name="Mangenot S."/>
            <person name="Bataille E."/>
            <person name="Dossat C."/>
            <person name="Gas S."/>
            <person name="Kreimeyer A."/>
            <person name="Lenoble P."/>
            <person name="Oztas S."/>
            <person name="Poulain J."/>
            <person name="Segurens B."/>
            <person name="Robert C."/>
            <person name="Abergel C."/>
            <person name="Claverie J.-M."/>
            <person name="Raoult D."/>
            <person name="Medigue C."/>
            <person name="Weissenbach J."/>
            <person name="Cruveiller S."/>
        </authorList>
    </citation>
    <scope>NUCLEOTIDE SEQUENCE [LARGE SCALE GENOMIC DNA]</scope>
    <source>
        <strain>AYE</strain>
    </source>
</reference>
<sequence length="243" mass="26083">MLIIPAIDLKDGKCVRLKQGRMEDDTVFSDDPVATAQHWVNEGARRLHLVDLNGAFAGTPIHKPVVEAIAKAQPELPIQIGGGIRSLETIEHYLEAGVTFVIIGTKAVQEPEFVEEACKRFAGHIIVGIDAMNGMVATDGWANVTDVKATDLAKRFADAGVSSIVYTDIARDGMMQGVNVEQTVNLAQYSGLPVIASGGVTNLDDVRNLKGQPGILGAITGRAIYEGTLNLREAQLLLDENRL</sequence>
<gene>
    <name evidence="1" type="primary">hisA</name>
    <name type="ordered locus">ABAYE0250</name>
</gene>
<evidence type="ECO:0000255" key="1">
    <source>
        <dbReference type="HAMAP-Rule" id="MF_01014"/>
    </source>
</evidence>
<organism>
    <name type="scientific">Acinetobacter baumannii (strain AYE)</name>
    <dbReference type="NCBI Taxonomy" id="509173"/>
    <lineage>
        <taxon>Bacteria</taxon>
        <taxon>Pseudomonadati</taxon>
        <taxon>Pseudomonadota</taxon>
        <taxon>Gammaproteobacteria</taxon>
        <taxon>Moraxellales</taxon>
        <taxon>Moraxellaceae</taxon>
        <taxon>Acinetobacter</taxon>
        <taxon>Acinetobacter calcoaceticus/baumannii complex</taxon>
    </lineage>
</organism>
<feature type="chain" id="PRO_1000135069" description="1-(5-phosphoribosyl)-5-[(5-phosphoribosylamino)methylideneamino] imidazole-4-carboxamide isomerase">
    <location>
        <begin position="1"/>
        <end position="243"/>
    </location>
</feature>
<feature type="active site" description="Proton acceptor" evidence="1">
    <location>
        <position position="8"/>
    </location>
</feature>
<feature type="active site" description="Proton donor" evidence="1">
    <location>
        <position position="130"/>
    </location>
</feature>
<comment type="catalytic activity">
    <reaction evidence="1">
        <text>1-(5-phospho-beta-D-ribosyl)-5-[(5-phospho-beta-D-ribosylamino)methylideneamino]imidazole-4-carboxamide = 5-[(5-phospho-1-deoxy-D-ribulos-1-ylimino)methylamino]-1-(5-phospho-beta-D-ribosyl)imidazole-4-carboxamide</text>
        <dbReference type="Rhea" id="RHEA:15469"/>
        <dbReference type="ChEBI" id="CHEBI:58435"/>
        <dbReference type="ChEBI" id="CHEBI:58525"/>
        <dbReference type="EC" id="5.3.1.16"/>
    </reaction>
</comment>
<comment type="pathway">
    <text evidence="1">Amino-acid biosynthesis; L-histidine biosynthesis; L-histidine from 5-phospho-alpha-D-ribose 1-diphosphate: step 4/9.</text>
</comment>
<comment type="subcellular location">
    <subcellularLocation>
        <location evidence="1">Cytoplasm</location>
    </subcellularLocation>
</comment>
<comment type="similarity">
    <text evidence="1">Belongs to the HisA/HisF family.</text>
</comment>
<name>HIS4_ACIBY</name>
<keyword id="KW-0028">Amino-acid biosynthesis</keyword>
<keyword id="KW-0963">Cytoplasm</keyword>
<keyword id="KW-0368">Histidine biosynthesis</keyword>
<keyword id="KW-0413">Isomerase</keyword>